<gene>
    <name type="ORF">ORF3b</name>
</gene>
<reference key="1">
    <citation type="submission" date="1994-02" db="EMBL/GenBank/DDBJ databases">
        <authorList>
            <person name="Hyon S."/>
            <person name="Park Y.I."/>
        </authorList>
    </citation>
    <scope>NUCLEOTIDE SEQUENCE [MRNA]</scope>
</reference>
<sequence>MDKSESTSAGRNRRRRPRRGSRSASSSADANFRVLSQQLSRLNKTLAAGRPTINHPTFVGSERCKPGYTFSSITLNPPKIDRGSYYGKRLLLPDSVTEFDKKLVSRIQIRVNPLPKFDSTVWVTVRKVPASSDLSVAAISAMFADGASPVLVYQYAASGVQANNKLLYDLSAMRADIGDMRKYAVLVYSKDDALETDELVLHVDVEHQRIPTSGVLPV</sequence>
<name>CAPSD_CMVAS</name>
<accession>Q66154</accession>
<dbReference type="EMBL" id="X77855">
    <property type="protein sequence ID" value="CAA54846.1"/>
    <property type="molecule type" value="mRNA"/>
</dbReference>
<dbReference type="PIR" id="S42098">
    <property type="entry name" value="S42098"/>
</dbReference>
<dbReference type="SMR" id="Q66154"/>
<dbReference type="GO" id="GO:1990904">
    <property type="term" value="C:ribonucleoprotein complex"/>
    <property type="evidence" value="ECO:0007669"/>
    <property type="project" value="UniProtKB-KW"/>
</dbReference>
<dbReference type="GO" id="GO:0039617">
    <property type="term" value="C:T=3 icosahedral viral capsid"/>
    <property type="evidence" value="ECO:0007669"/>
    <property type="project" value="UniProtKB-KW"/>
</dbReference>
<dbReference type="GO" id="GO:0019013">
    <property type="term" value="C:viral nucleocapsid"/>
    <property type="evidence" value="ECO:0007669"/>
    <property type="project" value="UniProtKB-KW"/>
</dbReference>
<dbReference type="GO" id="GO:0003723">
    <property type="term" value="F:RNA binding"/>
    <property type="evidence" value="ECO:0007669"/>
    <property type="project" value="UniProtKB-KW"/>
</dbReference>
<dbReference type="GO" id="GO:0005198">
    <property type="term" value="F:structural molecule activity"/>
    <property type="evidence" value="ECO:0007669"/>
    <property type="project" value="InterPro"/>
</dbReference>
<dbReference type="Gene3D" id="2.60.120.530">
    <property type="entry name" value="Cucumovirus coat protein, subunit A"/>
    <property type="match status" value="1"/>
</dbReference>
<dbReference type="InterPro" id="IPR000247">
    <property type="entry name" value="Cucumovirus_coat"/>
</dbReference>
<dbReference type="InterPro" id="IPR037137">
    <property type="entry name" value="Cucumovirus_coat_Asu_sf"/>
</dbReference>
<dbReference type="Pfam" id="PF00760">
    <property type="entry name" value="Cucumo_coat"/>
    <property type="match status" value="1"/>
</dbReference>
<dbReference type="PRINTS" id="PR00222">
    <property type="entry name" value="CUCUMOCOAT"/>
</dbReference>
<dbReference type="SUPFAM" id="SSF88633">
    <property type="entry name" value="Positive stranded ssRNA viruses"/>
    <property type="match status" value="1"/>
</dbReference>
<feature type="chain" id="PRO_0000083196" description="Capsid protein">
    <location>
        <begin position="1"/>
        <end position="218"/>
    </location>
</feature>
<feature type="region of interest" description="Disordered" evidence="2">
    <location>
        <begin position="1"/>
        <end position="29"/>
    </location>
</feature>
<feature type="compositionally biased region" description="Low complexity" evidence="2">
    <location>
        <begin position="1"/>
        <end position="10"/>
    </location>
</feature>
<feature type="compositionally biased region" description="Basic residues" evidence="2">
    <location>
        <begin position="11"/>
        <end position="21"/>
    </location>
</feature>
<feature type="modified residue" description="N-acetylmethionine; by host" evidence="1">
    <location>
        <position position="1"/>
    </location>
</feature>
<organismHost>
    <name type="scientific">Cucumis sativus</name>
    <name type="common">Cucumber</name>
    <dbReference type="NCBI Taxonomy" id="3659"/>
</organismHost>
<organismHost>
    <name type="scientific">Solanum lycopersicum</name>
    <name type="common">Tomato</name>
    <name type="synonym">Lycopersicon esculentum</name>
    <dbReference type="NCBI Taxonomy" id="4081"/>
</organismHost>
<organismHost>
    <name type="scientific">Spinacia oleracea</name>
    <name type="common">Spinach</name>
    <dbReference type="NCBI Taxonomy" id="3562"/>
</organismHost>
<evidence type="ECO:0000250" key="1"/>
<evidence type="ECO:0000256" key="2">
    <source>
        <dbReference type="SAM" id="MobiDB-lite"/>
    </source>
</evidence>
<evidence type="ECO:0000305" key="3"/>
<comment type="function">
    <text evidence="1">Capsid protein. Probably binds RNA and plays a role in packaging (By similarity).</text>
</comment>
<comment type="subcellular location">
    <subcellularLocation>
        <location evidence="3">Virion</location>
    </subcellularLocation>
</comment>
<comment type="domain">
    <text evidence="1">The N-terminal arginine-rich stretch does not seem to be the major RNA-binding region that allows formation of an infectious ribonucleoprotein complex.</text>
</comment>
<comment type="similarity">
    <text evidence="3">Belongs to the cucumovirus capsid protein family.</text>
</comment>
<proteinExistence type="evidence at transcript level"/>
<keyword id="KW-0007">Acetylation</keyword>
<keyword id="KW-0167">Capsid protein</keyword>
<keyword id="KW-0687">Ribonucleoprotein</keyword>
<keyword id="KW-0694">RNA-binding</keyword>
<keyword id="KW-1142">T=3 icosahedral capsid protein</keyword>
<keyword id="KW-0543">Viral nucleoprotein</keyword>
<keyword id="KW-0946">Virion</keyword>
<organism>
    <name type="scientific">Cucumber mosaic virus (strain As)</name>
    <name type="common">CMV</name>
    <dbReference type="NCBI Taxonomy" id="117118"/>
    <lineage>
        <taxon>Viruses</taxon>
        <taxon>Riboviria</taxon>
        <taxon>Orthornavirae</taxon>
        <taxon>Kitrinoviricota</taxon>
        <taxon>Alsuviricetes</taxon>
        <taxon>Martellivirales</taxon>
        <taxon>Bromoviridae</taxon>
        <taxon>Cucumovirus</taxon>
        <taxon>Cucumber mosaic virus</taxon>
    </lineage>
</organism>
<protein>
    <recommendedName>
        <fullName>Capsid protein</fullName>
        <shortName>CP</shortName>
    </recommendedName>
    <alternativeName>
        <fullName>Coat protein</fullName>
    </alternativeName>
</protein>